<reference key="1">
    <citation type="journal article" date="2005" name="Genome Res.">
        <title>The Chlamydophila abortus genome sequence reveals an array of variable proteins that contribute to interspecies variation.</title>
        <authorList>
            <person name="Thomson N.R."/>
            <person name="Yeats C."/>
            <person name="Bell K."/>
            <person name="Holden M.T.G."/>
            <person name="Bentley S.D."/>
            <person name="Livingstone M."/>
            <person name="Cerdeno-Tarraga A.-M."/>
            <person name="Harris B."/>
            <person name="Doggett J."/>
            <person name="Ormond D."/>
            <person name="Mungall K."/>
            <person name="Clarke K."/>
            <person name="Feltwell T."/>
            <person name="Hance Z."/>
            <person name="Sanders M."/>
            <person name="Quail M.A."/>
            <person name="Price C."/>
            <person name="Barrell B.G."/>
            <person name="Parkhill J."/>
            <person name="Longbottom D."/>
        </authorList>
    </citation>
    <scope>NUCLEOTIDE SEQUENCE [LARGE SCALE GENOMIC DNA]</scope>
    <source>
        <strain>DSM 27085 / S26/3</strain>
    </source>
</reference>
<evidence type="ECO:0000255" key="1">
    <source>
        <dbReference type="HAMAP-Rule" id="MF_01039"/>
    </source>
</evidence>
<gene>
    <name evidence="1" type="primary">gpmA</name>
    <name type="ordered locus">CAB872</name>
</gene>
<protein>
    <recommendedName>
        <fullName evidence="1">2,3-bisphosphoglycerate-dependent phosphoglycerate mutase</fullName>
        <shortName evidence="1">BPG-dependent PGAM</shortName>
        <shortName evidence="1">PGAM</shortName>
        <shortName evidence="1">Phosphoglyceromutase</shortName>
        <shortName evidence="1">dPGM</shortName>
        <ecNumber evidence="1">5.4.2.11</ecNumber>
    </recommendedName>
</protein>
<accession>Q5L4Y3</accession>
<feature type="chain" id="PRO_0000229116" description="2,3-bisphosphoglycerate-dependent phosphoglycerate mutase">
    <location>
        <begin position="1"/>
        <end position="227"/>
    </location>
</feature>
<feature type="active site" description="Tele-phosphohistidine intermediate" evidence="1">
    <location>
        <position position="9"/>
    </location>
</feature>
<feature type="active site" description="Proton donor/acceptor" evidence="1">
    <location>
        <position position="110"/>
    </location>
</feature>
<feature type="binding site" evidence="1">
    <location>
        <begin position="8"/>
        <end position="15"/>
    </location>
    <ligand>
        <name>substrate</name>
    </ligand>
</feature>
<feature type="binding site" evidence="1">
    <location>
        <begin position="21"/>
        <end position="22"/>
    </location>
    <ligand>
        <name>substrate</name>
    </ligand>
</feature>
<feature type="binding site" evidence="1">
    <location>
        <position position="58"/>
    </location>
    <ligand>
        <name>substrate</name>
    </ligand>
</feature>
<feature type="binding site" evidence="1">
    <location>
        <begin position="110"/>
        <end position="113"/>
    </location>
    <ligand>
        <name>substrate</name>
    </ligand>
</feature>
<feature type="binding site" evidence="1">
    <location>
        <position position="121"/>
    </location>
    <ligand>
        <name>substrate</name>
    </ligand>
</feature>
<feature type="binding site" evidence="1">
    <location>
        <begin position="137"/>
        <end position="138"/>
    </location>
    <ligand>
        <name>substrate</name>
    </ligand>
</feature>
<feature type="binding site" evidence="1">
    <location>
        <begin position="181"/>
        <end position="182"/>
    </location>
    <ligand>
        <name>substrate</name>
    </ligand>
</feature>
<feature type="site" description="Transition state stabilizer" evidence="1">
    <location>
        <position position="180"/>
    </location>
</feature>
<keyword id="KW-0312">Gluconeogenesis</keyword>
<keyword id="KW-0324">Glycolysis</keyword>
<keyword id="KW-0413">Isomerase</keyword>
<comment type="function">
    <text evidence="1">Catalyzes the interconversion of 2-phosphoglycerate and 3-phosphoglycerate.</text>
</comment>
<comment type="catalytic activity">
    <reaction evidence="1">
        <text>(2R)-2-phosphoglycerate = (2R)-3-phosphoglycerate</text>
        <dbReference type="Rhea" id="RHEA:15901"/>
        <dbReference type="ChEBI" id="CHEBI:58272"/>
        <dbReference type="ChEBI" id="CHEBI:58289"/>
        <dbReference type="EC" id="5.4.2.11"/>
    </reaction>
</comment>
<comment type="pathway">
    <text evidence="1">Carbohydrate degradation; glycolysis; pyruvate from D-glyceraldehyde 3-phosphate: step 3/5.</text>
</comment>
<comment type="similarity">
    <text evidence="1">Belongs to the phosphoglycerate mutase family. BPG-dependent PGAM subfamily.</text>
</comment>
<dbReference type="EC" id="5.4.2.11" evidence="1"/>
<dbReference type="EMBL" id="CR848038">
    <property type="protein sequence ID" value="CAH64312.1"/>
    <property type="molecule type" value="Genomic_DNA"/>
</dbReference>
<dbReference type="RefSeq" id="WP_006344475.1">
    <property type="nucleotide sequence ID" value="NC_004552.2"/>
</dbReference>
<dbReference type="SMR" id="Q5L4Y3"/>
<dbReference type="KEGG" id="cab:CAB872"/>
<dbReference type="eggNOG" id="COG0588">
    <property type="taxonomic scope" value="Bacteria"/>
</dbReference>
<dbReference type="HOGENOM" id="CLU_033323_1_4_0"/>
<dbReference type="OrthoDB" id="9781415at2"/>
<dbReference type="UniPathway" id="UPA00109">
    <property type="reaction ID" value="UER00186"/>
</dbReference>
<dbReference type="Proteomes" id="UP000001012">
    <property type="component" value="Chromosome"/>
</dbReference>
<dbReference type="GO" id="GO:0004619">
    <property type="term" value="F:phosphoglycerate mutase activity"/>
    <property type="evidence" value="ECO:0007669"/>
    <property type="project" value="UniProtKB-EC"/>
</dbReference>
<dbReference type="GO" id="GO:0006094">
    <property type="term" value="P:gluconeogenesis"/>
    <property type="evidence" value="ECO:0007669"/>
    <property type="project" value="UniProtKB-UniRule"/>
</dbReference>
<dbReference type="GO" id="GO:0006096">
    <property type="term" value="P:glycolytic process"/>
    <property type="evidence" value="ECO:0007669"/>
    <property type="project" value="UniProtKB-UniRule"/>
</dbReference>
<dbReference type="CDD" id="cd07067">
    <property type="entry name" value="HP_PGM_like"/>
    <property type="match status" value="1"/>
</dbReference>
<dbReference type="Gene3D" id="3.40.50.1240">
    <property type="entry name" value="Phosphoglycerate mutase-like"/>
    <property type="match status" value="1"/>
</dbReference>
<dbReference type="HAMAP" id="MF_01039">
    <property type="entry name" value="PGAM_GpmA"/>
    <property type="match status" value="1"/>
</dbReference>
<dbReference type="InterPro" id="IPR013078">
    <property type="entry name" value="His_Pase_superF_clade-1"/>
</dbReference>
<dbReference type="InterPro" id="IPR029033">
    <property type="entry name" value="His_PPase_superfam"/>
</dbReference>
<dbReference type="InterPro" id="IPR005952">
    <property type="entry name" value="Phosphogly_mut1"/>
</dbReference>
<dbReference type="NCBIfam" id="NF002217">
    <property type="entry name" value="PRK01112.1"/>
    <property type="match status" value="1"/>
</dbReference>
<dbReference type="PANTHER" id="PTHR11931">
    <property type="entry name" value="PHOSPHOGLYCERATE MUTASE"/>
    <property type="match status" value="1"/>
</dbReference>
<dbReference type="Pfam" id="PF00300">
    <property type="entry name" value="His_Phos_1"/>
    <property type="match status" value="2"/>
</dbReference>
<dbReference type="SMART" id="SM00855">
    <property type="entry name" value="PGAM"/>
    <property type="match status" value="1"/>
</dbReference>
<dbReference type="SUPFAM" id="SSF53254">
    <property type="entry name" value="Phosphoglycerate mutase-like"/>
    <property type="match status" value="1"/>
</dbReference>
<sequence>MAFLILLRHGKSVWNEKNLFTGWVDIPLSQKGIDEAMLAGEAIKDLPIDCIFTSSLVRSLMTALLAMTHHNSKKIPYIVHDDPEQKHMSKIYSDEVNHMIPLYRSSALNERMYGELQGKNKKKTAEQFGEEQVKLWRRSYKTAPPNGESLYDTGQRTIPYFQETIFPLLQNSKNVFVSAHGNSLRSLIMDIEKLSEEEVHSLELPTGKPIVYLWTGHTFERHPELFG</sequence>
<name>GPMA_CHLAB</name>
<organism>
    <name type="scientific">Chlamydia abortus (strain DSM 27085 / S26/3)</name>
    <name type="common">Chlamydophila abortus</name>
    <dbReference type="NCBI Taxonomy" id="218497"/>
    <lineage>
        <taxon>Bacteria</taxon>
        <taxon>Pseudomonadati</taxon>
        <taxon>Chlamydiota</taxon>
        <taxon>Chlamydiia</taxon>
        <taxon>Chlamydiales</taxon>
        <taxon>Chlamydiaceae</taxon>
        <taxon>Chlamydia/Chlamydophila group</taxon>
        <taxon>Chlamydia</taxon>
    </lineage>
</organism>
<proteinExistence type="inferred from homology"/>